<sequence length="253" mass="28560">MTPVNQPTRQIVLDTETTGMNQFGAHYEGHCIIEIGAVEMINRRLTGNNFHIYIKPNRPVDPDAIKVHGITDEMLADKPMFNEVAQQFIDYIQGAELLIHNAPFDVGFMDYEFKKLNLNINTDAICMVTDTLQMARQMYPGKRNSLDALCDRLGIDNSKRTLHGALLDAEILADVYLTMTGGQTSLFDENEPEIAVVAVQEQIQSAVAFSQDLKRLQPNADELQAHLDYLLLLNKKSKGNCLWEKRLAELKTH</sequence>
<keyword id="KW-0235">DNA replication</keyword>
<keyword id="KW-0239">DNA-directed DNA polymerase</keyword>
<keyword id="KW-0269">Exonuclease</keyword>
<keyword id="KW-0378">Hydrolase</keyword>
<keyword id="KW-0460">Magnesium</keyword>
<keyword id="KW-0464">Manganese</keyword>
<keyword id="KW-0479">Metal-binding</keyword>
<keyword id="KW-0540">Nuclease</keyword>
<keyword id="KW-0548">Nucleotidyltransferase</keyword>
<keyword id="KW-1185">Reference proteome</keyword>
<keyword id="KW-0808">Transferase</keyword>
<reference key="1">
    <citation type="journal article" date="2001" name="Proc. Natl. Acad. Sci. U.S.A.">
        <title>Complete genomic sequence of Pasteurella multocida Pm70.</title>
        <authorList>
            <person name="May B.J."/>
            <person name="Zhang Q."/>
            <person name="Li L.L."/>
            <person name="Paustian M.L."/>
            <person name="Whittam T.S."/>
            <person name="Kapur V."/>
        </authorList>
    </citation>
    <scope>NUCLEOTIDE SEQUENCE [LARGE SCALE GENOMIC DNA]</scope>
    <source>
        <strain>Pm70</strain>
    </source>
</reference>
<feature type="chain" id="PRO_0000105487" description="DNA polymerase III subunit epsilon">
    <location>
        <begin position="1"/>
        <end position="253"/>
    </location>
</feature>
<feature type="active site" description="Proton acceptor" evidence="1">
    <location>
        <position position="163"/>
    </location>
</feature>
<feature type="binding site" evidence="1">
    <location>
        <position position="14"/>
    </location>
    <ligand>
        <name>a divalent metal cation</name>
        <dbReference type="ChEBI" id="CHEBI:60240"/>
        <label>1</label>
        <note>catalytic</note>
    </ligand>
</feature>
<feature type="binding site" evidence="1">
    <location>
        <position position="14"/>
    </location>
    <ligand>
        <name>a divalent metal cation</name>
        <dbReference type="ChEBI" id="CHEBI:60240"/>
        <label>2</label>
        <note>catalytic</note>
    </ligand>
</feature>
<feature type="binding site" evidence="1">
    <location>
        <position position="14"/>
    </location>
    <ligand>
        <name>substrate</name>
    </ligand>
</feature>
<feature type="binding site" evidence="1">
    <location>
        <position position="16"/>
    </location>
    <ligand>
        <name>a divalent metal cation</name>
        <dbReference type="ChEBI" id="CHEBI:60240"/>
        <label>1</label>
        <note>catalytic</note>
    </ligand>
</feature>
<feature type="binding site" evidence="1">
    <location>
        <position position="16"/>
    </location>
    <ligand>
        <name>substrate</name>
    </ligand>
</feature>
<feature type="binding site" evidence="1">
    <location>
        <position position="63"/>
    </location>
    <ligand>
        <name>substrate</name>
    </ligand>
</feature>
<feature type="binding site" evidence="1">
    <location>
        <position position="68"/>
    </location>
    <ligand>
        <name>substrate</name>
    </ligand>
</feature>
<feature type="binding site" evidence="1">
    <location>
        <position position="168"/>
    </location>
    <ligand>
        <name>a divalent metal cation</name>
        <dbReference type="ChEBI" id="CHEBI:60240"/>
        <label>1</label>
        <note>catalytic</note>
    </ligand>
</feature>
<feature type="binding site" evidence="1">
    <location>
        <position position="168"/>
    </location>
    <ligand>
        <name>substrate</name>
    </ligand>
</feature>
<organism>
    <name type="scientific">Pasteurella multocida (strain Pm70)</name>
    <dbReference type="NCBI Taxonomy" id="272843"/>
    <lineage>
        <taxon>Bacteria</taxon>
        <taxon>Pseudomonadati</taxon>
        <taxon>Pseudomonadota</taxon>
        <taxon>Gammaproteobacteria</taxon>
        <taxon>Pasteurellales</taxon>
        <taxon>Pasteurellaceae</taxon>
        <taxon>Pasteurella</taxon>
    </lineage>
</organism>
<evidence type="ECO:0000250" key="1"/>
<protein>
    <recommendedName>
        <fullName>DNA polymerase III subunit epsilon</fullName>
        <ecNumber>2.7.7.7</ecNumber>
    </recommendedName>
</protein>
<name>DPO3E_PASMU</name>
<proteinExistence type="inferred from homology"/>
<dbReference type="EC" id="2.7.7.7"/>
<dbReference type="EMBL" id="AE004439">
    <property type="protein sequence ID" value="AAK02190.1"/>
    <property type="molecule type" value="Genomic_DNA"/>
</dbReference>
<dbReference type="RefSeq" id="WP_005753391.1">
    <property type="nucleotide sequence ID" value="NC_002663.1"/>
</dbReference>
<dbReference type="SMR" id="Q9CPE0"/>
<dbReference type="STRING" id="272843.PM0106"/>
<dbReference type="EnsemblBacteria" id="AAK02190">
    <property type="protein sequence ID" value="AAK02190"/>
    <property type="gene ID" value="PM0106"/>
</dbReference>
<dbReference type="KEGG" id="pmu:PM0106"/>
<dbReference type="PATRIC" id="fig|272843.6.peg.110"/>
<dbReference type="HOGENOM" id="CLU_047806_2_0_6"/>
<dbReference type="OrthoDB" id="9804290at2"/>
<dbReference type="Proteomes" id="UP000000809">
    <property type="component" value="Chromosome"/>
</dbReference>
<dbReference type="GO" id="GO:0005829">
    <property type="term" value="C:cytosol"/>
    <property type="evidence" value="ECO:0007669"/>
    <property type="project" value="TreeGrafter"/>
</dbReference>
<dbReference type="GO" id="GO:0008408">
    <property type="term" value="F:3'-5' exonuclease activity"/>
    <property type="evidence" value="ECO:0007669"/>
    <property type="project" value="TreeGrafter"/>
</dbReference>
<dbReference type="GO" id="GO:0003677">
    <property type="term" value="F:DNA binding"/>
    <property type="evidence" value="ECO:0007669"/>
    <property type="project" value="InterPro"/>
</dbReference>
<dbReference type="GO" id="GO:0003887">
    <property type="term" value="F:DNA-directed DNA polymerase activity"/>
    <property type="evidence" value="ECO:0007669"/>
    <property type="project" value="UniProtKB-KW"/>
</dbReference>
<dbReference type="GO" id="GO:0046872">
    <property type="term" value="F:metal ion binding"/>
    <property type="evidence" value="ECO:0007669"/>
    <property type="project" value="UniProtKB-KW"/>
</dbReference>
<dbReference type="GO" id="GO:0045004">
    <property type="term" value="P:DNA replication proofreading"/>
    <property type="evidence" value="ECO:0007669"/>
    <property type="project" value="TreeGrafter"/>
</dbReference>
<dbReference type="CDD" id="cd06131">
    <property type="entry name" value="DNA_pol_III_epsilon_Ecoli_like"/>
    <property type="match status" value="1"/>
</dbReference>
<dbReference type="FunFam" id="3.30.420.10:FF:000012">
    <property type="entry name" value="DNA polymerase III subunit epsilon"/>
    <property type="match status" value="1"/>
</dbReference>
<dbReference type="Gene3D" id="3.30.420.10">
    <property type="entry name" value="Ribonuclease H-like superfamily/Ribonuclease H"/>
    <property type="match status" value="1"/>
</dbReference>
<dbReference type="InterPro" id="IPR006054">
    <property type="entry name" value="DnaQ"/>
</dbReference>
<dbReference type="InterPro" id="IPR006309">
    <property type="entry name" value="DnaQ_proteo"/>
</dbReference>
<dbReference type="InterPro" id="IPR013520">
    <property type="entry name" value="Exonuclease_RNaseT/DNA_pol3"/>
</dbReference>
<dbReference type="InterPro" id="IPR012337">
    <property type="entry name" value="RNaseH-like_sf"/>
</dbReference>
<dbReference type="InterPro" id="IPR036397">
    <property type="entry name" value="RNaseH_sf"/>
</dbReference>
<dbReference type="NCBIfam" id="TIGR00573">
    <property type="entry name" value="dnaq"/>
    <property type="match status" value="1"/>
</dbReference>
<dbReference type="NCBIfam" id="TIGR01406">
    <property type="entry name" value="dnaQ_proteo"/>
    <property type="match status" value="1"/>
</dbReference>
<dbReference type="NCBIfam" id="NF004316">
    <property type="entry name" value="PRK05711.1"/>
    <property type="match status" value="1"/>
</dbReference>
<dbReference type="PANTHER" id="PTHR30231">
    <property type="entry name" value="DNA POLYMERASE III SUBUNIT EPSILON"/>
    <property type="match status" value="1"/>
</dbReference>
<dbReference type="PANTHER" id="PTHR30231:SF41">
    <property type="entry name" value="DNA POLYMERASE III SUBUNIT EPSILON"/>
    <property type="match status" value="1"/>
</dbReference>
<dbReference type="Pfam" id="PF00929">
    <property type="entry name" value="RNase_T"/>
    <property type="match status" value="1"/>
</dbReference>
<dbReference type="SMART" id="SM00479">
    <property type="entry name" value="EXOIII"/>
    <property type="match status" value="1"/>
</dbReference>
<dbReference type="SUPFAM" id="SSF53098">
    <property type="entry name" value="Ribonuclease H-like"/>
    <property type="match status" value="1"/>
</dbReference>
<comment type="function">
    <text evidence="1">DNA polymerase III is a complex, multichain enzyme responsible for most of the replicative synthesis in bacteria. The epsilon subunit contain the editing function and is a proofreading 3'-5' exonuclease (By similarity).</text>
</comment>
<comment type="catalytic activity">
    <reaction>
        <text>DNA(n) + a 2'-deoxyribonucleoside 5'-triphosphate = DNA(n+1) + diphosphate</text>
        <dbReference type="Rhea" id="RHEA:22508"/>
        <dbReference type="Rhea" id="RHEA-COMP:17339"/>
        <dbReference type="Rhea" id="RHEA-COMP:17340"/>
        <dbReference type="ChEBI" id="CHEBI:33019"/>
        <dbReference type="ChEBI" id="CHEBI:61560"/>
        <dbReference type="ChEBI" id="CHEBI:173112"/>
        <dbReference type="EC" id="2.7.7.7"/>
    </reaction>
</comment>
<comment type="cofactor">
    <cofactor evidence="1">
        <name>Mg(2+)</name>
        <dbReference type="ChEBI" id="CHEBI:18420"/>
    </cofactor>
    <cofactor evidence="1">
        <name>Mn(2+)</name>
        <dbReference type="ChEBI" id="CHEBI:29035"/>
    </cofactor>
    <text evidence="1">Binds 2 divalent metal cations. Magnesium or manganese.</text>
</comment>
<comment type="subunit">
    <text evidence="1">DNA polymerase III contains a core (composed of alpha, epsilon and theta chains) that associates with a tau subunit. This core dimerizes to form the POLIII' complex. PolIII' associates with the gamma complex (composed of gamma, delta, delta', psi and chi chains) and with the beta chain to form the complete DNA polymerase III complex (By similarity).</text>
</comment>
<accession>Q9CPE0</accession>
<gene>
    <name type="primary">dnaQ</name>
    <name type="ordered locus">PM0106</name>
</gene>